<gene>
    <name type="primary">ribK</name>
    <name type="ordered locus">TK1272</name>
</gene>
<keyword id="KW-0285">Flavoprotein</keyword>
<keyword id="KW-0288">FMN</keyword>
<keyword id="KW-0418">Kinase</keyword>
<keyword id="KW-0460">Magnesium</keyword>
<keyword id="KW-0479">Metal-binding</keyword>
<keyword id="KW-0547">Nucleotide-binding</keyword>
<keyword id="KW-1185">Reference proteome</keyword>
<keyword id="KW-0808">Transferase</keyword>
<name>RIFK_THEKO</name>
<organism>
    <name type="scientific">Thermococcus kodakarensis (strain ATCC BAA-918 / JCM 12380 / KOD1)</name>
    <name type="common">Pyrococcus kodakaraensis (strain KOD1)</name>
    <dbReference type="NCBI Taxonomy" id="69014"/>
    <lineage>
        <taxon>Archaea</taxon>
        <taxon>Methanobacteriati</taxon>
        <taxon>Methanobacteriota</taxon>
        <taxon>Thermococci</taxon>
        <taxon>Thermococcales</taxon>
        <taxon>Thermococcaceae</taxon>
        <taxon>Thermococcus</taxon>
    </lineage>
</organism>
<accession>Q5JGN9</accession>
<protein>
    <recommendedName>
        <fullName>Riboflavin kinase</fullName>
        <shortName>RFK</shortName>
        <ecNumber>2.7.1.161</ecNumber>
    </recommendedName>
    <alternativeName>
        <fullName>CTP-dependent riboflavin kinase</fullName>
    </alternativeName>
    <alternativeName>
        <fullName>CTP:riboflavin 5'-phosphotransferase</fullName>
    </alternativeName>
    <alternativeName>
        <fullName>Flavokinase</fullName>
    </alternativeName>
</protein>
<comment type="function">
    <text evidence="1">Catalyzes the CTP-dependent phosphorylation of riboflavin (vitamin B2) to form flavin mononucleotide (FMN).</text>
</comment>
<comment type="catalytic activity">
    <reaction>
        <text>riboflavin + CTP = CDP + FMN + H(+)</text>
        <dbReference type="Rhea" id="RHEA:25021"/>
        <dbReference type="ChEBI" id="CHEBI:15378"/>
        <dbReference type="ChEBI" id="CHEBI:37563"/>
        <dbReference type="ChEBI" id="CHEBI:57986"/>
        <dbReference type="ChEBI" id="CHEBI:58069"/>
        <dbReference type="ChEBI" id="CHEBI:58210"/>
        <dbReference type="EC" id="2.7.1.161"/>
    </reaction>
</comment>
<comment type="cofactor">
    <cofactor evidence="1">
        <name>Mg(2+)</name>
        <dbReference type="ChEBI" id="CHEBI:18420"/>
    </cofactor>
    <text evidence="1">Binds 1 Mg(2+) ion per subunit.</text>
</comment>
<comment type="pathway">
    <text>Cofactor biosynthesis; FMN biosynthesis; FMN from riboflavin (CTP route): step 1/1.</text>
</comment>
<comment type="similarity">
    <text evidence="2">Belongs to the archaeal riboflavin kinase family.</text>
</comment>
<feature type="chain" id="PRO_0000322105" description="Riboflavin kinase">
    <location>
        <begin position="1"/>
        <end position="211"/>
    </location>
</feature>
<feature type="region of interest" description="H-T-H motif-like">
    <location>
        <begin position="1"/>
        <end position="85"/>
    </location>
</feature>
<feature type="region of interest" description="Riboflavin kinase">
    <location>
        <begin position="86"/>
        <end position="211"/>
    </location>
</feature>
<feature type="binding site" evidence="1">
    <location>
        <begin position="95"/>
        <end position="100"/>
    </location>
    <ligand>
        <name>CDP</name>
        <dbReference type="ChEBI" id="CHEBI:58069"/>
    </ligand>
</feature>
<feature type="binding site" evidence="1">
    <location>
        <position position="122"/>
    </location>
    <ligand>
        <name>Mg(2+)</name>
        <dbReference type="ChEBI" id="CHEBI:18420"/>
    </ligand>
</feature>
<feature type="binding site" evidence="1">
    <location>
        <position position="124"/>
    </location>
    <ligand>
        <name>Mg(2+)</name>
        <dbReference type="ChEBI" id="CHEBI:18420"/>
    </ligand>
</feature>
<feature type="binding site" evidence="1">
    <location>
        <position position="178"/>
    </location>
    <ligand>
        <name>FMN</name>
        <dbReference type="ChEBI" id="CHEBI:58210"/>
    </ligand>
</feature>
<feature type="binding site" evidence="1">
    <location>
        <position position="186"/>
    </location>
    <ligand>
        <name>FMN</name>
        <dbReference type="ChEBI" id="CHEBI:58210"/>
    </ligand>
</feature>
<feature type="binding site" evidence="1">
    <location>
        <begin position="191"/>
        <end position="194"/>
    </location>
    <ligand>
        <name>CDP</name>
        <dbReference type="ChEBI" id="CHEBI:58069"/>
    </ligand>
</feature>
<dbReference type="EC" id="2.7.1.161"/>
<dbReference type="EMBL" id="AP006878">
    <property type="protein sequence ID" value="BAD85461.1"/>
    <property type="molecule type" value="Genomic_DNA"/>
</dbReference>
<dbReference type="RefSeq" id="WP_011250223.1">
    <property type="nucleotide sequence ID" value="NC_006624.1"/>
</dbReference>
<dbReference type="SMR" id="Q5JGN9"/>
<dbReference type="FunCoup" id="Q5JGN9">
    <property type="interactions" value="14"/>
</dbReference>
<dbReference type="STRING" id="69014.TK1272"/>
<dbReference type="EnsemblBacteria" id="BAD85461">
    <property type="protein sequence ID" value="BAD85461"/>
    <property type="gene ID" value="TK1272"/>
</dbReference>
<dbReference type="GeneID" id="78447789"/>
<dbReference type="KEGG" id="tko:TK1272"/>
<dbReference type="PATRIC" id="fig|69014.16.peg.1244"/>
<dbReference type="eggNOG" id="arCOG01904">
    <property type="taxonomic scope" value="Archaea"/>
</dbReference>
<dbReference type="HOGENOM" id="CLU_088476_0_0_2"/>
<dbReference type="InParanoid" id="Q5JGN9"/>
<dbReference type="OrthoDB" id="30955at2157"/>
<dbReference type="PhylomeDB" id="Q5JGN9"/>
<dbReference type="UniPathway" id="UPA00276">
    <property type="reaction ID" value="UER00929"/>
</dbReference>
<dbReference type="Proteomes" id="UP000000536">
    <property type="component" value="Chromosome"/>
</dbReference>
<dbReference type="GO" id="GO:0003677">
    <property type="term" value="F:DNA binding"/>
    <property type="evidence" value="ECO:0007669"/>
    <property type="project" value="InterPro"/>
</dbReference>
<dbReference type="GO" id="GO:0000287">
    <property type="term" value="F:magnesium ion binding"/>
    <property type="evidence" value="ECO:0007669"/>
    <property type="project" value="UniProtKB-UniRule"/>
</dbReference>
<dbReference type="GO" id="GO:0000166">
    <property type="term" value="F:nucleotide binding"/>
    <property type="evidence" value="ECO:0007669"/>
    <property type="project" value="UniProtKB-UniRule"/>
</dbReference>
<dbReference type="GO" id="GO:0008531">
    <property type="term" value="F:riboflavin kinase activity"/>
    <property type="evidence" value="ECO:0007669"/>
    <property type="project" value="InterPro"/>
</dbReference>
<dbReference type="GO" id="GO:0009398">
    <property type="term" value="P:FMN biosynthetic process"/>
    <property type="evidence" value="ECO:0007669"/>
    <property type="project" value="UniProtKB-UniRule"/>
</dbReference>
<dbReference type="GO" id="GO:0006355">
    <property type="term" value="P:regulation of DNA-templated transcription"/>
    <property type="evidence" value="ECO:0007669"/>
    <property type="project" value="InterPro"/>
</dbReference>
<dbReference type="GO" id="GO:0009231">
    <property type="term" value="P:riboflavin biosynthetic process"/>
    <property type="evidence" value="ECO:0007669"/>
    <property type="project" value="InterPro"/>
</dbReference>
<dbReference type="CDD" id="cd00092">
    <property type="entry name" value="HTH_CRP"/>
    <property type="match status" value="1"/>
</dbReference>
<dbReference type="Gene3D" id="2.40.30.30">
    <property type="entry name" value="Riboflavin kinase-like"/>
    <property type="match status" value="1"/>
</dbReference>
<dbReference type="Gene3D" id="1.10.10.10">
    <property type="entry name" value="Winged helix-like DNA-binding domain superfamily/Winged helix DNA-binding domain"/>
    <property type="match status" value="1"/>
</dbReference>
<dbReference type="HAMAP" id="MF_01285">
    <property type="entry name" value="Riboflavin_kinase"/>
    <property type="match status" value="1"/>
</dbReference>
<dbReference type="InterPro" id="IPR012318">
    <property type="entry name" value="HTH_CRP"/>
</dbReference>
<dbReference type="InterPro" id="IPR039063">
    <property type="entry name" value="RibK_CTP-dep"/>
</dbReference>
<dbReference type="InterPro" id="IPR023470">
    <property type="entry name" value="Riboflavin_kinase_archaeal"/>
</dbReference>
<dbReference type="InterPro" id="IPR023602">
    <property type="entry name" value="Riboflavin_kinase_CTP-dep"/>
</dbReference>
<dbReference type="InterPro" id="IPR023465">
    <property type="entry name" value="Riboflavin_kinase_dom_sf"/>
</dbReference>
<dbReference type="InterPro" id="IPR036388">
    <property type="entry name" value="WH-like_DNA-bd_sf"/>
</dbReference>
<dbReference type="InterPro" id="IPR036390">
    <property type="entry name" value="WH_DNA-bd_sf"/>
</dbReference>
<dbReference type="PANTHER" id="PTHR40706">
    <property type="entry name" value="RIBOFLAVIN KINASE"/>
    <property type="match status" value="1"/>
</dbReference>
<dbReference type="PANTHER" id="PTHR40706:SF1">
    <property type="entry name" value="RIBOFLAVIN KINASE"/>
    <property type="match status" value="1"/>
</dbReference>
<dbReference type="Pfam" id="PF01982">
    <property type="entry name" value="CTP-dep_RFKase"/>
    <property type="match status" value="1"/>
</dbReference>
<dbReference type="Pfam" id="PF13545">
    <property type="entry name" value="HTH_Crp_2"/>
    <property type="match status" value="1"/>
</dbReference>
<dbReference type="SMART" id="SM00419">
    <property type="entry name" value="HTH_CRP"/>
    <property type="match status" value="1"/>
</dbReference>
<dbReference type="SUPFAM" id="SSF82114">
    <property type="entry name" value="Riboflavin kinase-like"/>
    <property type="match status" value="1"/>
</dbReference>
<dbReference type="SUPFAM" id="SSF46785">
    <property type="entry name" value="Winged helix' DNA-binding domain"/>
    <property type="match status" value="1"/>
</dbReference>
<dbReference type="PROSITE" id="PS51063">
    <property type="entry name" value="HTH_CRP_2"/>
    <property type="match status" value="1"/>
</dbReference>
<sequence length="211" mass="23441">MKKILMLIELSERNAIGRPVRITIRELADALNTSPQTVLRLLAELEDEGLIERKTEGRRTYIEILPKGLDFLQDICDKISNALSKGVIVGEVVSGLGEGAYYVRQYEPLIEEYLGFKPFPGTLNVKILFPKTVLDAVCNIRPVIIPGFVKDGRTFGDVKAYPVMIGGIKGAIVVPSRTIHPPRIAEIIAPVNLREALKLKDGDRVRLEVIQ</sequence>
<proteinExistence type="inferred from homology"/>
<evidence type="ECO:0000250" key="1"/>
<evidence type="ECO:0000305" key="2"/>
<reference key="1">
    <citation type="journal article" date="2005" name="Genome Res.">
        <title>Complete genome sequence of the hyperthermophilic archaeon Thermococcus kodakaraensis KOD1 and comparison with Pyrococcus genomes.</title>
        <authorList>
            <person name="Fukui T."/>
            <person name="Atomi H."/>
            <person name="Kanai T."/>
            <person name="Matsumi R."/>
            <person name="Fujiwara S."/>
            <person name="Imanaka T."/>
        </authorList>
    </citation>
    <scope>NUCLEOTIDE SEQUENCE [LARGE SCALE GENOMIC DNA]</scope>
    <source>
        <strain>ATCC BAA-918 / JCM 12380 / KOD1</strain>
    </source>
</reference>